<gene>
    <name evidence="9 11" type="primary">Ythdf1</name>
</gene>
<name>YTHD1_MOUSE</name>
<feature type="initiator methionine" description="Removed" evidence="1">
    <location>
        <position position="1"/>
    </location>
</feature>
<feature type="chain" id="PRO_0000223074" description="YTH domain-containing family protein 1">
    <location>
        <begin position="2"/>
        <end position="559"/>
    </location>
</feature>
<feature type="domain" description="YTH" evidence="3">
    <location>
        <begin position="389"/>
        <end position="523"/>
    </location>
</feature>
<feature type="region of interest" description="Disordered" evidence="4">
    <location>
        <begin position="1"/>
        <end position="49"/>
    </location>
</feature>
<feature type="region of interest" description="Disordered" evidence="4">
    <location>
        <begin position="239"/>
        <end position="365"/>
    </location>
</feature>
<feature type="compositionally biased region" description="Basic and acidic residues" evidence="4">
    <location>
        <begin position="24"/>
        <end position="33"/>
    </location>
</feature>
<feature type="compositionally biased region" description="Low complexity" evidence="4">
    <location>
        <begin position="279"/>
        <end position="305"/>
    </location>
</feature>
<feature type="compositionally biased region" description="Low complexity" evidence="4">
    <location>
        <begin position="314"/>
        <end position="326"/>
    </location>
</feature>
<feature type="compositionally biased region" description="Polar residues" evidence="4">
    <location>
        <begin position="343"/>
        <end position="361"/>
    </location>
</feature>
<feature type="binding site" evidence="1">
    <location>
        <begin position="395"/>
        <end position="397"/>
    </location>
    <ligand>
        <name>RNA</name>
        <dbReference type="ChEBI" id="CHEBI:33697"/>
    </ligand>
    <ligandPart>
        <name>N(6)-methyladenosine 5'-phosphate residue</name>
        <dbReference type="ChEBI" id="CHEBI:74449"/>
    </ligandPart>
</feature>
<feature type="binding site" evidence="1">
    <location>
        <position position="401"/>
    </location>
    <ligand>
        <name>RNA</name>
        <dbReference type="ChEBI" id="CHEBI:33697"/>
    </ligand>
    <ligandPart>
        <name>N(6)-methyladenosine 5'-phosphate residue</name>
        <dbReference type="ChEBI" id="CHEBI:74449"/>
    </ligandPart>
</feature>
<feature type="binding site" evidence="1">
    <location>
        <begin position="411"/>
        <end position="412"/>
    </location>
    <ligand>
        <name>RNA</name>
        <dbReference type="ChEBI" id="CHEBI:33697"/>
    </ligand>
    <ligandPart>
        <name>N(6)-methyladenosine 5'-phosphate residue</name>
        <dbReference type="ChEBI" id="CHEBI:74449"/>
    </ligandPart>
</feature>
<feature type="binding site" evidence="2">
    <location>
        <position position="441"/>
    </location>
    <ligand>
        <name>RNA</name>
        <dbReference type="ChEBI" id="CHEBI:33697"/>
    </ligand>
    <ligandPart>
        <name>N(6)-methyladenosine 5'-phosphate residue</name>
        <dbReference type="ChEBI" id="CHEBI:74449"/>
    </ligandPart>
</feature>
<feature type="binding site" evidence="1">
    <location>
        <position position="465"/>
    </location>
    <ligand>
        <name>RNA</name>
        <dbReference type="ChEBI" id="CHEBI:33697"/>
    </ligand>
    <ligandPart>
        <name>N(6)-methyladenosine 5'-phosphate residue</name>
        <dbReference type="ChEBI" id="CHEBI:74449"/>
    </ligandPart>
</feature>
<feature type="binding site" evidence="1">
    <location>
        <position position="470"/>
    </location>
    <ligand>
        <name>RNA</name>
        <dbReference type="ChEBI" id="CHEBI:33697"/>
    </ligand>
    <ligandPart>
        <name>N(6)-methyladenosine 5'-phosphate residue</name>
        <dbReference type="ChEBI" id="CHEBI:74449"/>
    </ligandPart>
</feature>
<feature type="modified residue" description="N-acetylserine" evidence="1">
    <location>
        <position position="2"/>
    </location>
</feature>
<feature type="modified residue" description="Phosphoserine" evidence="1">
    <location>
        <position position="182"/>
    </location>
</feature>
<sequence length="559" mass="60879">MSATSVDPQRTKGQDNKVQNGSLHQKDAVHDNDFEPYLSGQSNPSNSYPSMSDPYLSSYYPPSIGFPYSLSEAPWSTAGDPPIPYLTTYGQLSNGDHHFMHDAVFGQPGGLGNNIYQHRFNFFPENPAFSAWGTSGSQGQQTQSSAYGSSYTYPPSSLGGTVVDGQTGFHSDSLNKAPGMNSLEQGMVGLKIGDVTTSAVKTVGSVVNSVALTGVLSGNGGTNVNMPVSKPTSWAAIASKPAKPQPKMKTKSGPIVGGALPPPPIKHNMDIGTWDNKGPAPKASAPQQTPSPQAAPQPQQVAQPLPVQPPPLVQPQYQSPQQPLQPRWVAPRNRNAAFGQSGGANSDSNSVGNAQPTSAPSVESHPVLEKLKAAHSYNPKEFDWNLKSGRVFIIKSYSEDDIHRSIKYSIWCSTEHGNKRLDGAFRSMSSKGPVYLLFSVNGSGHFCGVAEMKSPVDYGTSAGVWSQDKWKGKFDVKWIFVKDVPNNQLRHIRLENNDNKPVTNSRDTQEVPLEKAKQVLKIIASYKHTTSIFDDFSHYEKRQEEEEVVRKERQNRNKQ</sequence>
<protein>
    <recommendedName>
        <fullName evidence="10">YTH domain-containing family protein 1</fullName>
    </recommendedName>
    <alternativeName>
        <fullName evidence="1">Dermatomyositis associated with cancer putative autoantigen 1 homolog</fullName>
        <shortName evidence="1">DACA-1 homolog</shortName>
    </alternativeName>
</protein>
<reference key="1">
    <citation type="journal article" date="2005" name="Science">
        <title>The transcriptional landscape of the mammalian genome.</title>
        <authorList>
            <person name="Carninci P."/>
            <person name="Kasukawa T."/>
            <person name="Katayama S."/>
            <person name="Gough J."/>
            <person name="Frith M.C."/>
            <person name="Maeda N."/>
            <person name="Oyama R."/>
            <person name="Ravasi T."/>
            <person name="Lenhard B."/>
            <person name="Wells C."/>
            <person name="Kodzius R."/>
            <person name="Shimokawa K."/>
            <person name="Bajic V.B."/>
            <person name="Brenner S.E."/>
            <person name="Batalov S."/>
            <person name="Forrest A.R."/>
            <person name="Zavolan M."/>
            <person name="Davis M.J."/>
            <person name="Wilming L.G."/>
            <person name="Aidinis V."/>
            <person name="Allen J.E."/>
            <person name="Ambesi-Impiombato A."/>
            <person name="Apweiler R."/>
            <person name="Aturaliya R.N."/>
            <person name="Bailey T.L."/>
            <person name="Bansal M."/>
            <person name="Baxter L."/>
            <person name="Beisel K.W."/>
            <person name="Bersano T."/>
            <person name="Bono H."/>
            <person name="Chalk A.M."/>
            <person name="Chiu K.P."/>
            <person name="Choudhary V."/>
            <person name="Christoffels A."/>
            <person name="Clutterbuck D.R."/>
            <person name="Crowe M.L."/>
            <person name="Dalla E."/>
            <person name="Dalrymple B.P."/>
            <person name="de Bono B."/>
            <person name="Della Gatta G."/>
            <person name="di Bernardo D."/>
            <person name="Down T."/>
            <person name="Engstrom P."/>
            <person name="Fagiolini M."/>
            <person name="Faulkner G."/>
            <person name="Fletcher C.F."/>
            <person name="Fukushima T."/>
            <person name="Furuno M."/>
            <person name="Futaki S."/>
            <person name="Gariboldi M."/>
            <person name="Georgii-Hemming P."/>
            <person name="Gingeras T.R."/>
            <person name="Gojobori T."/>
            <person name="Green R.E."/>
            <person name="Gustincich S."/>
            <person name="Harbers M."/>
            <person name="Hayashi Y."/>
            <person name="Hensch T.K."/>
            <person name="Hirokawa N."/>
            <person name="Hill D."/>
            <person name="Huminiecki L."/>
            <person name="Iacono M."/>
            <person name="Ikeo K."/>
            <person name="Iwama A."/>
            <person name="Ishikawa T."/>
            <person name="Jakt M."/>
            <person name="Kanapin A."/>
            <person name="Katoh M."/>
            <person name="Kawasawa Y."/>
            <person name="Kelso J."/>
            <person name="Kitamura H."/>
            <person name="Kitano H."/>
            <person name="Kollias G."/>
            <person name="Krishnan S.P."/>
            <person name="Kruger A."/>
            <person name="Kummerfeld S.K."/>
            <person name="Kurochkin I.V."/>
            <person name="Lareau L.F."/>
            <person name="Lazarevic D."/>
            <person name="Lipovich L."/>
            <person name="Liu J."/>
            <person name="Liuni S."/>
            <person name="McWilliam S."/>
            <person name="Madan Babu M."/>
            <person name="Madera M."/>
            <person name="Marchionni L."/>
            <person name="Matsuda H."/>
            <person name="Matsuzawa S."/>
            <person name="Miki H."/>
            <person name="Mignone F."/>
            <person name="Miyake S."/>
            <person name="Morris K."/>
            <person name="Mottagui-Tabar S."/>
            <person name="Mulder N."/>
            <person name="Nakano N."/>
            <person name="Nakauchi H."/>
            <person name="Ng P."/>
            <person name="Nilsson R."/>
            <person name="Nishiguchi S."/>
            <person name="Nishikawa S."/>
            <person name="Nori F."/>
            <person name="Ohara O."/>
            <person name="Okazaki Y."/>
            <person name="Orlando V."/>
            <person name="Pang K.C."/>
            <person name="Pavan W.J."/>
            <person name="Pavesi G."/>
            <person name="Pesole G."/>
            <person name="Petrovsky N."/>
            <person name="Piazza S."/>
            <person name="Reed J."/>
            <person name="Reid J.F."/>
            <person name="Ring B.Z."/>
            <person name="Ringwald M."/>
            <person name="Rost B."/>
            <person name="Ruan Y."/>
            <person name="Salzberg S.L."/>
            <person name="Sandelin A."/>
            <person name="Schneider C."/>
            <person name="Schoenbach C."/>
            <person name="Sekiguchi K."/>
            <person name="Semple C.A."/>
            <person name="Seno S."/>
            <person name="Sessa L."/>
            <person name="Sheng Y."/>
            <person name="Shibata Y."/>
            <person name="Shimada H."/>
            <person name="Shimada K."/>
            <person name="Silva D."/>
            <person name="Sinclair B."/>
            <person name="Sperling S."/>
            <person name="Stupka E."/>
            <person name="Sugiura K."/>
            <person name="Sultana R."/>
            <person name="Takenaka Y."/>
            <person name="Taki K."/>
            <person name="Tammoja K."/>
            <person name="Tan S.L."/>
            <person name="Tang S."/>
            <person name="Taylor M.S."/>
            <person name="Tegner J."/>
            <person name="Teichmann S.A."/>
            <person name="Ueda H.R."/>
            <person name="van Nimwegen E."/>
            <person name="Verardo R."/>
            <person name="Wei C.L."/>
            <person name="Yagi K."/>
            <person name="Yamanishi H."/>
            <person name="Zabarovsky E."/>
            <person name="Zhu S."/>
            <person name="Zimmer A."/>
            <person name="Hide W."/>
            <person name="Bult C."/>
            <person name="Grimmond S.M."/>
            <person name="Teasdale R.D."/>
            <person name="Liu E.T."/>
            <person name="Brusic V."/>
            <person name="Quackenbush J."/>
            <person name="Wahlestedt C."/>
            <person name="Mattick J.S."/>
            <person name="Hume D.A."/>
            <person name="Kai C."/>
            <person name="Sasaki D."/>
            <person name="Tomaru Y."/>
            <person name="Fukuda S."/>
            <person name="Kanamori-Katayama M."/>
            <person name="Suzuki M."/>
            <person name="Aoki J."/>
            <person name="Arakawa T."/>
            <person name="Iida J."/>
            <person name="Imamura K."/>
            <person name="Itoh M."/>
            <person name="Kato T."/>
            <person name="Kawaji H."/>
            <person name="Kawagashira N."/>
            <person name="Kawashima T."/>
            <person name="Kojima M."/>
            <person name="Kondo S."/>
            <person name="Konno H."/>
            <person name="Nakano K."/>
            <person name="Ninomiya N."/>
            <person name="Nishio T."/>
            <person name="Okada M."/>
            <person name="Plessy C."/>
            <person name="Shibata K."/>
            <person name="Shiraki T."/>
            <person name="Suzuki S."/>
            <person name="Tagami M."/>
            <person name="Waki K."/>
            <person name="Watahiki A."/>
            <person name="Okamura-Oho Y."/>
            <person name="Suzuki H."/>
            <person name="Kawai J."/>
            <person name="Hayashizaki Y."/>
        </authorList>
    </citation>
    <scope>NUCLEOTIDE SEQUENCE [LARGE SCALE MRNA]</scope>
    <source>
        <strain>C57BL/6J</strain>
        <strain>NOD</strain>
        <tissue>Medulla oblongata</tissue>
        <tissue>Spleen</tissue>
    </source>
</reference>
<reference key="2">
    <citation type="journal article" date="2004" name="Genome Res.">
        <title>The status, quality, and expansion of the NIH full-length cDNA project: the Mammalian Gene Collection (MGC).</title>
        <authorList>
            <consortium name="The MGC Project Team"/>
        </authorList>
    </citation>
    <scope>NUCLEOTIDE SEQUENCE [LARGE SCALE MRNA]</scope>
    <source>
        <tissue>Brain</tissue>
        <tissue>Embryo</tissue>
    </source>
</reference>
<reference key="3">
    <citation type="journal article" date="2010" name="Cell">
        <title>A tissue-specific atlas of mouse protein phosphorylation and expression.</title>
        <authorList>
            <person name="Huttlin E.L."/>
            <person name="Jedrychowski M.P."/>
            <person name="Elias J.E."/>
            <person name="Goswami T."/>
            <person name="Rad R."/>
            <person name="Beausoleil S.A."/>
            <person name="Villen J."/>
            <person name="Haas W."/>
            <person name="Sowa M.E."/>
            <person name="Gygi S.P."/>
        </authorList>
    </citation>
    <scope>IDENTIFICATION BY MASS SPECTROMETRY [LARGE SCALE ANALYSIS]</scope>
    <source>
        <tissue>Pancreas</tissue>
        <tissue>Spleen</tissue>
        <tissue>Testis</tissue>
    </source>
</reference>
<reference key="4">
    <citation type="journal article" date="2018" name="Nature">
        <title>m6A facilitates hippocampus-dependent learning and memory through YTHDF1.</title>
        <authorList>
            <person name="Shi H."/>
            <person name="Zhang X."/>
            <person name="Weng Y.L."/>
            <person name="Lu Z."/>
            <person name="Liu Y."/>
            <person name="Lu Z."/>
            <person name="Li J."/>
            <person name="Hao P."/>
            <person name="Zhang Y."/>
            <person name="Zhang F."/>
            <person name="Wu Y."/>
            <person name="Delgado J.Y."/>
            <person name="Su Y."/>
            <person name="Patel M.J."/>
            <person name="Cao X."/>
            <person name="Shen B."/>
            <person name="Huang X."/>
            <person name="Ming G.L."/>
            <person name="Zhuang X."/>
            <person name="Song H."/>
            <person name="He C."/>
            <person name="Zhou T."/>
        </authorList>
    </citation>
    <scope>FUNCTION</scope>
    <scope>TISSUE SPECIFICITY</scope>
    <scope>DISRUPTION PHENOTYPE</scope>
</reference>
<reference key="5">
    <citation type="journal article" date="2019" name="Nature">
        <title>Anti-tumour immunity controlled through mRNA m6A methylation and YTHDF1 in dendritic cells.</title>
        <authorList>
            <person name="Han D."/>
            <person name="Liu J."/>
            <person name="Chen C."/>
            <person name="Dong L."/>
            <person name="Liu Y."/>
            <person name="Chang R."/>
            <person name="Huang X."/>
            <person name="Liu Y."/>
            <person name="Wang J."/>
            <person name="Dougherty U."/>
            <person name="Bissonnette M.B."/>
            <person name="Shen B."/>
            <person name="Weichselbaum R.R."/>
            <person name="Xu M.M."/>
            <person name="He C."/>
        </authorList>
    </citation>
    <scope>FUNCTION</scope>
    <scope>DISRUPTION PHENOTYPE</scope>
</reference>
<reference key="6">
    <citation type="journal article" date="2019" name="Nucleic Acids Res.">
        <title>The m6A reader YTHDF1 regulates axon guidance through translational control of Robo3.1 expression.</title>
        <authorList>
            <person name="Zhuang M."/>
            <person name="Li X."/>
            <person name="Zhu J."/>
            <person name="Zhang J."/>
            <person name="Niu F."/>
            <person name="Liang F."/>
            <person name="Chen M."/>
            <person name="Li D."/>
            <person name="Han P."/>
            <person name="Ji S.J."/>
        </authorList>
    </citation>
    <scope>FUNCTION</scope>
    <scope>DISRUPTION PHENOTYPE</scope>
</reference>
<reference key="7">
    <citation type="journal article" date="2020" name="Genes Dev.">
        <title>Context-dependent functional compensation between Ythdf m6A reader proteins.</title>
        <authorList>
            <person name="Lasman L."/>
            <person name="Krupalnik V."/>
            <person name="Viukov S."/>
            <person name="Mor N."/>
            <person name="Aguilera-Castrejon A."/>
            <person name="Schneir D."/>
            <person name="Bayerl J."/>
            <person name="Mizrahi O."/>
            <person name="Peles S."/>
            <person name="Tawil S."/>
            <person name="Sathe S."/>
            <person name="Nachshon A."/>
            <person name="Shani T."/>
            <person name="Zerbib M."/>
            <person name="Kilimnik I."/>
            <person name="Aigner S."/>
            <person name="Shankar A."/>
            <person name="Mueller J.R."/>
            <person name="Schwartz S."/>
            <person name="Stern-Ginossar N."/>
            <person name="Yeo G.W."/>
            <person name="Geula S."/>
            <person name="Novershtern N."/>
            <person name="Hanna J.H."/>
        </authorList>
    </citation>
    <scope>FUNCTION</scope>
    <scope>SUBCELLULAR LOCATION</scope>
    <scope>DISRUPTION PHENOTYPE</scope>
</reference>
<organism>
    <name type="scientific">Mus musculus</name>
    <name type="common">Mouse</name>
    <dbReference type="NCBI Taxonomy" id="10090"/>
    <lineage>
        <taxon>Eukaryota</taxon>
        <taxon>Metazoa</taxon>
        <taxon>Chordata</taxon>
        <taxon>Craniata</taxon>
        <taxon>Vertebrata</taxon>
        <taxon>Euteleostomi</taxon>
        <taxon>Mammalia</taxon>
        <taxon>Eutheria</taxon>
        <taxon>Euarchontoglires</taxon>
        <taxon>Glires</taxon>
        <taxon>Rodentia</taxon>
        <taxon>Myomorpha</taxon>
        <taxon>Muroidea</taxon>
        <taxon>Muridae</taxon>
        <taxon>Murinae</taxon>
        <taxon>Mus</taxon>
        <taxon>Mus</taxon>
    </lineage>
</organism>
<dbReference type="EMBL" id="AK046768">
    <property type="protein sequence ID" value="BAC32861.1"/>
    <property type="molecule type" value="mRNA"/>
</dbReference>
<dbReference type="EMBL" id="AK172582">
    <property type="protein sequence ID" value="BAE43080.1"/>
    <property type="molecule type" value="mRNA"/>
</dbReference>
<dbReference type="EMBL" id="BC061479">
    <property type="protein sequence ID" value="AAH61479.1"/>
    <property type="molecule type" value="mRNA"/>
</dbReference>
<dbReference type="EMBL" id="BC065050">
    <property type="protein sequence ID" value="AAH65050.1"/>
    <property type="molecule type" value="mRNA"/>
</dbReference>
<dbReference type="CCDS" id="CCDS17188.1"/>
<dbReference type="RefSeq" id="NP_776122.1">
    <property type="nucleotide sequence ID" value="NM_173761.3"/>
</dbReference>
<dbReference type="SMR" id="P59326"/>
<dbReference type="BioGRID" id="230804">
    <property type="interactions" value="11"/>
</dbReference>
<dbReference type="FunCoup" id="P59326">
    <property type="interactions" value="3391"/>
</dbReference>
<dbReference type="STRING" id="10090.ENSMUSP00000037808"/>
<dbReference type="GlyGen" id="P59326">
    <property type="glycosylation" value="3 sites, 1 O-linked glycan (3 sites)"/>
</dbReference>
<dbReference type="iPTMnet" id="P59326"/>
<dbReference type="PhosphoSitePlus" id="P59326"/>
<dbReference type="jPOST" id="P59326"/>
<dbReference type="PaxDb" id="10090-ENSMUSP00000037808"/>
<dbReference type="ProteomicsDB" id="275120"/>
<dbReference type="Pumba" id="P59326"/>
<dbReference type="Antibodypedia" id="44459">
    <property type="antibodies" value="154 antibodies from 26 providers"/>
</dbReference>
<dbReference type="DNASU" id="228994"/>
<dbReference type="Ensembl" id="ENSMUST00000037299.15">
    <property type="protein sequence ID" value="ENSMUSP00000037808.9"/>
    <property type="gene ID" value="ENSMUSG00000038848.15"/>
</dbReference>
<dbReference type="GeneID" id="228994"/>
<dbReference type="KEGG" id="mmu:228994"/>
<dbReference type="UCSC" id="uc008okd.1">
    <property type="organism name" value="mouse"/>
</dbReference>
<dbReference type="AGR" id="MGI:1917431"/>
<dbReference type="CTD" id="54915"/>
<dbReference type="MGI" id="MGI:1917431">
    <property type="gene designation" value="Ythdf1"/>
</dbReference>
<dbReference type="VEuPathDB" id="HostDB:ENSMUSG00000038848"/>
<dbReference type="eggNOG" id="KOG1901">
    <property type="taxonomic scope" value="Eukaryota"/>
</dbReference>
<dbReference type="GeneTree" id="ENSGT00940000156911"/>
<dbReference type="HOGENOM" id="CLU_022715_0_0_1"/>
<dbReference type="InParanoid" id="P59326"/>
<dbReference type="OMA" id="PQPKMKV"/>
<dbReference type="OrthoDB" id="64605at9989"/>
<dbReference type="PhylomeDB" id="P59326"/>
<dbReference type="TreeFam" id="TF323736"/>
<dbReference type="BioGRID-ORCS" id="228994">
    <property type="hits" value="7 hits in 80 CRISPR screens"/>
</dbReference>
<dbReference type="CD-CODE" id="CE726F99">
    <property type="entry name" value="Postsynaptic density"/>
</dbReference>
<dbReference type="PRO" id="PR:P59326"/>
<dbReference type="Proteomes" id="UP000000589">
    <property type="component" value="Chromosome 2"/>
</dbReference>
<dbReference type="RNAct" id="P59326">
    <property type="molecule type" value="protein"/>
</dbReference>
<dbReference type="Bgee" id="ENSMUSG00000038848">
    <property type="expression patterns" value="Expressed in paneth cell and 268 other cell types or tissues"/>
</dbReference>
<dbReference type="ExpressionAtlas" id="P59326">
    <property type="expression patterns" value="baseline and differential"/>
</dbReference>
<dbReference type="GO" id="GO:0005737">
    <property type="term" value="C:cytoplasm"/>
    <property type="evidence" value="ECO:0000314"/>
    <property type="project" value="UniProtKB"/>
</dbReference>
<dbReference type="GO" id="GO:0010494">
    <property type="term" value="C:cytoplasmic stress granule"/>
    <property type="evidence" value="ECO:0000250"/>
    <property type="project" value="UniProtKB"/>
</dbReference>
<dbReference type="GO" id="GO:0000932">
    <property type="term" value="C:P-body"/>
    <property type="evidence" value="ECO:0000250"/>
    <property type="project" value="UniProtKB"/>
</dbReference>
<dbReference type="GO" id="GO:1990247">
    <property type="term" value="F:N6-methyladenosine-containing RNA reader activity"/>
    <property type="evidence" value="ECO:0000314"/>
    <property type="project" value="UniProtKB"/>
</dbReference>
<dbReference type="GO" id="GO:0043022">
    <property type="term" value="F:ribosome binding"/>
    <property type="evidence" value="ECO:0000250"/>
    <property type="project" value="UniProtKB"/>
</dbReference>
<dbReference type="GO" id="GO:0003723">
    <property type="term" value="F:RNA binding"/>
    <property type="evidence" value="ECO:0007669"/>
    <property type="project" value="UniProtKB-KW"/>
</dbReference>
<dbReference type="GO" id="GO:0002376">
    <property type="term" value="P:immune system process"/>
    <property type="evidence" value="ECO:0007669"/>
    <property type="project" value="UniProtKB-KW"/>
</dbReference>
<dbReference type="GO" id="GO:0007612">
    <property type="term" value="P:learning"/>
    <property type="evidence" value="ECO:0000315"/>
    <property type="project" value="UniProtKB"/>
</dbReference>
<dbReference type="GO" id="GO:0007613">
    <property type="term" value="P:memory"/>
    <property type="evidence" value="ECO:0000315"/>
    <property type="project" value="UniProtKB"/>
</dbReference>
<dbReference type="GO" id="GO:0061157">
    <property type="term" value="P:mRNA destabilization"/>
    <property type="evidence" value="ECO:0000315"/>
    <property type="project" value="UniProtKB"/>
</dbReference>
<dbReference type="GO" id="GO:0070925">
    <property type="term" value="P:organelle assembly"/>
    <property type="evidence" value="ECO:0000250"/>
    <property type="project" value="UniProtKB"/>
</dbReference>
<dbReference type="GO" id="GO:0045727">
    <property type="term" value="P:positive regulation of translation"/>
    <property type="evidence" value="ECO:0000314"/>
    <property type="project" value="UniProtKB"/>
</dbReference>
<dbReference type="GO" id="GO:0045948">
    <property type="term" value="P:positive regulation of translational initiation"/>
    <property type="evidence" value="ECO:0000250"/>
    <property type="project" value="UniProtKB"/>
</dbReference>
<dbReference type="GO" id="GO:0002577">
    <property type="term" value="P:regulation of antigen processing and presentation"/>
    <property type="evidence" value="ECO:0000315"/>
    <property type="project" value="UniProtKB"/>
</dbReference>
<dbReference type="GO" id="GO:1902667">
    <property type="term" value="P:regulation of axon guidance"/>
    <property type="evidence" value="ECO:0000315"/>
    <property type="project" value="UniProtKB"/>
</dbReference>
<dbReference type="GO" id="GO:1900271">
    <property type="term" value="P:regulation of long-term synaptic potentiation"/>
    <property type="evidence" value="ECO:0000315"/>
    <property type="project" value="UniProtKB"/>
</dbReference>
<dbReference type="GO" id="GO:0043488">
    <property type="term" value="P:regulation of mRNA stability"/>
    <property type="evidence" value="ECO:0000315"/>
    <property type="project" value="UniProtKB"/>
</dbReference>
<dbReference type="GO" id="GO:0034063">
    <property type="term" value="P:stress granule assembly"/>
    <property type="evidence" value="ECO:0000250"/>
    <property type="project" value="UniProtKB"/>
</dbReference>
<dbReference type="CDD" id="cd21134">
    <property type="entry name" value="YTH"/>
    <property type="match status" value="1"/>
</dbReference>
<dbReference type="FunFam" id="3.10.590.10:FF:000001">
    <property type="entry name" value="YTH domain family 1, isoform CRA_a"/>
    <property type="match status" value="1"/>
</dbReference>
<dbReference type="Gene3D" id="3.10.590.10">
    <property type="entry name" value="ph1033 like domains"/>
    <property type="match status" value="1"/>
</dbReference>
<dbReference type="InterPro" id="IPR007275">
    <property type="entry name" value="YTH_domain"/>
</dbReference>
<dbReference type="InterPro" id="IPR045168">
    <property type="entry name" value="YTH_prot"/>
</dbReference>
<dbReference type="PANTHER" id="PTHR12357:SF65">
    <property type="entry name" value="YTH DOMAIN-CONTAINING FAMILY PROTEIN 1"/>
    <property type="match status" value="1"/>
</dbReference>
<dbReference type="PANTHER" id="PTHR12357">
    <property type="entry name" value="YTH YT521-B HOMOLOGY DOMAIN-CONTAINING"/>
    <property type="match status" value="1"/>
</dbReference>
<dbReference type="Pfam" id="PF04146">
    <property type="entry name" value="YTH"/>
    <property type="match status" value="1"/>
</dbReference>
<dbReference type="PROSITE" id="PS50882">
    <property type="entry name" value="YTH"/>
    <property type="match status" value="1"/>
</dbReference>
<accession>P59326</accession>
<accession>Q3T9E2</accession>
<keyword id="KW-0007">Acetylation</keyword>
<keyword id="KW-0963">Cytoplasm</keyword>
<keyword id="KW-0391">Immunity</keyword>
<keyword id="KW-0597">Phosphoprotein</keyword>
<keyword id="KW-1185">Reference proteome</keyword>
<keyword id="KW-0694">RNA-binding</keyword>
<keyword id="KW-0832">Ubl conjugation</keyword>
<evidence type="ECO:0000250" key="1">
    <source>
        <dbReference type="UniProtKB" id="Q9BYJ9"/>
    </source>
</evidence>
<evidence type="ECO:0000250" key="2">
    <source>
        <dbReference type="UniProtKB" id="Q9Y5A9"/>
    </source>
</evidence>
<evidence type="ECO:0000255" key="3">
    <source>
        <dbReference type="PROSITE-ProRule" id="PRU00225"/>
    </source>
</evidence>
<evidence type="ECO:0000256" key="4">
    <source>
        <dbReference type="SAM" id="MobiDB-lite"/>
    </source>
</evidence>
<evidence type="ECO:0000269" key="5">
    <source>
    </source>
</evidence>
<evidence type="ECO:0000269" key="6">
    <source>
    </source>
</evidence>
<evidence type="ECO:0000269" key="7">
    <source>
    </source>
</evidence>
<evidence type="ECO:0000269" key="8">
    <source>
    </source>
</evidence>
<evidence type="ECO:0000303" key="9">
    <source>
    </source>
</evidence>
<evidence type="ECO:0000305" key="10"/>
<evidence type="ECO:0000312" key="11">
    <source>
        <dbReference type="MGI" id="MGI:1917431"/>
    </source>
</evidence>
<proteinExistence type="evidence at protein level"/>
<comment type="function">
    <text evidence="1 5 6 7 8">Specifically recognizes and binds N6-methyladenosine (m6A)-containing mRNAs, and regulates their stability (PubMed:30401835, PubMed:32943573). M6A is a modification present at internal sites of mRNAs and some non-coding RNAs and plays a role in mRNA stability and processing (PubMed:30401835, PubMed:32943573). Acts as a regulator of mRNA stability by promoting degradation of m6A-containing mRNAs via interaction with the CCR4-NOT complex (By similarity). The YTHDF paralogs (YTHDF1, YTHDF2 and YTHDF3) share m6A-containing mRNAs targets and act redundantly to mediate mRNA degradation and cellular differentiation (PubMed:32943573). Required to facilitate learning and memory formation in the hippocampus by binding to m6A-containing neuronal mRNAs (PubMed:30401835). Acts as a regulator of axon guidance by binding to m6A-containing ROBO3 transcripts (PubMed:30843071). Acts as a negative regulator of antigen cross-presentation in myeloid dendritic cells (PubMed:30728504). In the context of tumorigenesis, negative regulation of antigen cross-presentation limits the anti-tumor response by reducing efficiency of tumor-antigen cross-presentation (PubMed:30728504). Promotes formation of phase-separated membraneless compartments, such as P-bodies or stress granules, by undergoing liquid-liquid phase separation upon binding to mRNAs containing multiple m6A-modified residues: polymethylated mRNAs act as a multivalent scaffold for the binding of YTHDF proteins, juxtaposing their disordered regions and thereby leading to phase separation (By similarity). The resulting mRNA-YTHDF complexes then partition into different endogenous phase-separated membraneless compartments, such as P-bodies, stress granules or neuronal RNA granules (By similarity).</text>
</comment>
<comment type="subunit">
    <text evidence="1">Interacts with CNOT1; promoting recruitment of the CCR4-NOT complex (By similarity). Interacts with ribosomes (By similarity). Interacts with eIF3 (EIF3A or EIF3B). Interacts with YTHDF3 (By similarity).</text>
</comment>
<comment type="subcellular location">
    <subcellularLocation>
        <location evidence="8">Cytoplasm</location>
    </subcellularLocation>
    <subcellularLocation>
        <location evidence="1">Cytoplasm</location>
        <location evidence="1">P-body</location>
    </subcellularLocation>
    <subcellularLocation>
        <location evidence="1">Cytoplasm</location>
        <location evidence="1">Stress granule</location>
    </subcellularLocation>
</comment>
<comment type="tissue specificity">
    <text evidence="5">In brain, preferentially expressed in the hippocampus.</text>
</comment>
<comment type="domain">
    <text evidence="1">The disordered regions have the ability to interact with each other and to 'phase separate' into liquid droplets within the cytosol following binding to mRNAs containing multiple m6A-modified residues. This leads to the partition of m6A-containing mRNAs into membraneless compartments, where mRNAs may be stored, degraded or used to transport mRNAs to dendritic arbors in neurons.</text>
</comment>
<comment type="PTM">
    <text evidence="1">Ubiquitinated by the CUL7-FBXW8 E3 ligase complex leading to degradation. Deubiquitinated and stabilized by USP5 by removing 'Lys-11'-linked polyubiquitination.</text>
</comment>
<comment type="disruption phenotype">
    <text evidence="5 6 7 8">Mice are viable and were born at the expected Mendelian ratio (PubMed:32943573). They however display learning and memory defects (PubMed:30401835). Mice develop normally up to four months of age and have normal gross hippocampal histology (PubMed:30401835). They however show learning and memory defects as well as impaired hippocampal synaptic transmission and long-term potentiation (PubMed:30401835). Hippocampal CA1 neurons show reduced dendritic spine density but unaltered spine size (PubMed:30401835). Conditional deletion in spinal commissural neurons results in pre-crossing axon guidance defects (PubMed:30843071). Knockout mice show an improved tumor control associated with increased infiltration of the tumor by T-cells, due to elevated antigen-specific CD8(+) T-cell anti-tumor response (PubMed:30728504). Conditional deletion in myeloid dendritic cells causes increased cross-presentation of tumor antigens and the cross-priming of CD8(+) T-cells (PubMed:30728504). Mice lacking Ythdf1, Ythdf2 and Ythdf3 display early embryonic lethality and show defects in embryonic stem cell differentiation (PubMed:32943573).</text>
</comment>
<comment type="similarity">
    <text evidence="10">Belongs to the YTHDF family. YTHDF1 subfamily.</text>
</comment>
<comment type="caution">
    <text evidence="5 6 7 8">Was initially reported to act as a regulator of mRNA translation efficiency by promoting ribosome loading to m6A-containing mRNAs and by interacting with translation initiation factors eIF3 (EIF3A or EIF3B), thereby facilitating translation initiation (PubMed:30401835, PubMed:30728504, PubMed:30843071). These studies suggested that the 3 different paralogs (YTHDF1, YTHDF2 and YTHDF3) have unique functions with limited redundancy (PubMed:30401835, PubMed:30728504, PubMed:30843071). However, later studies showed that YTHDF1, YTHDF2 and YTHDF3 paralogs have redundant functions to a profound extent and directly promote degradation of m6A-containing mRNAs (PubMed:32943573). The effect on translation efficiency observed earlier is probably indirect (PubMed:32943573).</text>
</comment>